<evidence type="ECO:0000250" key="1"/>
<evidence type="ECO:0000250" key="2">
    <source>
        <dbReference type="UniProtKB" id="Q15181"/>
    </source>
</evidence>
<evidence type="ECO:0000305" key="3"/>
<feature type="initiator methionine" description="Removed" evidence="2">
    <location>
        <position position="1"/>
    </location>
</feature>
<feature type="chain" id="PRO_0000137568" description="Inorganic pyrophosphatase">
    <location>
        <begin position="2"/>
        <end position="289"/>
    </location>
</feature>
<feature type="binding site" evidence="1">
    <location>
        <position position="116"/>
    </location>
    <ligand>
        <name>Mg(2+)</name>
        <dbReference type="ChEBI" id="CHEBI:18420"/>
        <label>1</label>
    </ligand>
</feature>
<feature type="binding site" evidence="1">
    <location>
        <position position="121"/>
    </location>
    <ligand>
        <name>Mg(2+)</name>
        <dbReference type="ChEBI" id="CHEBI:18420"/>
        <label>1</label>
    </ligand>
</feature>
<feature type="binding site" evidence="1">
    <location>
        <position position="121"/>
    </location>
    <ligand>
        <name>Mg(2+)</name>
        <dbReference type="ChEBI" id="CHEBI:18420"/>
        <label>2</label>
    </ligand>
</feature>
<feature type="binding site" evidence="1">
    <location>
        <position position="153"/>
    </location>
    <ligand>
        <name>Mg(2+)</name>
        <dbReference type="ChEBI" id="CHEBI:18420"/>
        <label>1</label>
    </ligand>
</feature>
<feature type="modified residue" description="N-acetylserine" evidence="2">
    <location>
        <position position="2"/>
    </location>
</feature>
<feature type="modified residue" description="N6-acetyllysine" evidence="2">
    <location>
        <position position="57"/>
    </location>
</feature>
<feature type="modified residue" description="N6-acetyllysine" evidence="2">
    <location>
        <position position="228"/>
    </location>
</feature>
<feature type="modified residue" description="Phosphoserine" evidence="2">
    <location>
        <position position="250"/>
    </location>
</feature>
<protein>
    <recommendedName>
        <fullName>Inorganic pyrophosphatase</fullName>
        <ecNumber>3.6.1.1</ecNumber>
    </recommendedName>
    <alternativeName>
        <fullName>Pyrophosphate phospho-hydrolase</fullName>
        <shortName>PPase</shortName>
    </alternativeName>
</protein>
<sequence>MSGFSTEERAAPFSLEYRVFLKNEKGQYISPFHDIPIYADKDVFHMVVEVPRWSNAKMEIATKDPLNPIKQDVKKGKLRYVANLFPYKGYIWNYGAIPQTWEDPGHNDKHTGCCGDNDPIDVCEIGSKVCARGEIIGVKVLGILAMIDEGETDWKVIAINVDDPDAANYNDINDVKRLKPGYLEATVDWFRRYKVPDGKPENEFAFNAEFKDKDFAIDIIKSTHDHWKALVTKKTNGKGISCMNTTVSESPFKCDPDAARAIVDALPPPCESACTVPTDVDKWFHHQKN</sequence>
<comment type="catalytic activity">
    <reaction>
        <text>diphosphate + H2O = 2 phosphate + H(+)</text>
        <dbReference type="Rhea" id="RHEA:24576"/>
        <dbReference type="ChEBI" id="CHEBI:15377"/>
        <dbReference type="ChEBI" id="CHEBI:15378"/>
        <dbReference type="ChEBI" id="CHEBI:33019"/>
        <dbReference type="ChEBI" id="CHEBI:43474"/>
        <dbReference type="EC" id="3.6.1.1"/>
    </reaction>
</comment>
<comment type="cofactor">
    <cofactor evidence="1">
        <name>Mg(2+)</name>
        <dbReference type="ChEBI" id="CHEBI:18420"/>
    </cofactor>
</comment>
<comment type="subunit">
    <text evidence="1">Homodimer.</text>
</comment>
<comment type="subcellular location">
    <subcellularLocation>
        <location evidence="1">Cytoplasm</location>
    </subcellularLocation>
</comment>
<comment type="similarity">
    <text evidence="3">Belongs to the PPase family.</text>
</comment>
<comment type="sequence caution" evidence="3">
    <conflict type="erroneous initiation">
        <sequence resource="EMBL-CDS" id="BAE01782"/>
    </conflict>
</comment>
<dbReference type="EC" id="3.6.1.1"/>
<dbReference type="EMBL" id="AB169701">
    <property type="protein sequence ID" value="BAE01782.1"/>
    <property type="status" value="ALT_INIT"/>
    <property type="molecule type" value="mRNA"/>
</dbReference>
<dbReference type="RefSeq" id="NP_001270700.1">
    <property type="nucleotide sequence ID" value="NM_001283771.1"/>
</dbReference>
<dbReference type="SMR" id="Q4R543"/>
<dbReference type="STRING" id="9541.ENSMFAP00000022873"/>
<dbReference type="VEuPathDB" id="HostDB:ENSMFAG00000043098"/>
<dbReference type="eggNOG" id="KOG1626">
    <property type="taxonomic scope" value="Eukaryota"/>
</dbReference>
<dbReference type="OMA" id="GVWAMID"/>
<dbReference type="Proteomes" id="UP000233100">
    <property type="component" value="Chromosome 9"/>
</dbReference>
<dbReference type="GO" id="GO:0005737">
    <property type="term" value="C:cytoplasm"/>
    <property type="evidence" value="ECO:0007669"/>
    <property type="project" value="UniProtKB-SubCell"/>
</dbReference>
<dbReference type="GO" id="GO:0004427">
    <property type="term" value="F:inorganic diphosphate phosphatase activity"/>
    <property type="evidence" value="ECO:0007669"/>
    <property type="project" value="UniProtKB-EC"/>
</dbReference>
<dbReference type="GO" id="GO:0000287">
    <property type="term" value="F:magnesium ion binding"/>
    <property type="evidence" value="ECO:0007669"/>
    <property type="project" value="InterPro"/>
</dbReference>
<dbReference type="GO" id="GO:0006796">
    <property type="term" value="P:phosphate-containing compound metabolic process"/>
    <property type="evidence" value="ECO:0007669"/>
    <property type="project" value="InterPro"/>
</dbReference>
<dbReference type="CDD" id="cd00412">
    <property type="entry name" value="pyrophosphatase"/>
    <property type="match status" value="1"/>
</dbReference>
<dbReference type="FunFam" id="3.90.80.10:FF:000005">
    <property type="entry name" value="Pyrophosphatase (inorganic) 2"/>
    <property type="match status" value="1"/>
</dbReference>
<dbReference type="Gene3D" id="3.90.80.10">
    <property type="entry name" value="Inorganic pyrophosphatase"/>
    <property type="match status" value="1"/>
</dbReference>
<dbReference type="InterPro" id="IPR008162">
    <property type="entry name" value="Pyrophosphatase"/>
</dbReference>
<dbReference type="InterPro" id="IPR036649">
    <property type="entry name" value="Pyrophosphatase_sf"/>
</dbReference>
<dbReference type="PANTHER" id="PTHR10286">
    <property type="entry name" value="INORGANIC PYROPHOSPHATASE"/>
    <property type="match status" value="1"/>
</dbReference>
<dbReference type="Pfam" id="PF00719">
    <property type="entry name" value="Pyrophosphatase"/>
    <property type="match status" value="1"/>
</dbReference>
<dbReference type="SUPFAM" id="SSF50324">
    <property type="entry name" value="Inorganic pyrophosphatase"/>
    <property type="match status" value="1"/>
</dbReference>
<dbReference type="PROSITE" id="PS00387">
    <property type="entry name" value="PPASE"/>
    <property type="match status" value="1"/>
</dbReference>
<proteinExistence type="evidence at transcript level"/>
<accession>Q4R543</accession>
<organism>
    <name type="scientific">Macaca fascicularis</name>
    <name type="common">Crab-eating macaque</name>
    <name type="synonym">Cynomolgus monkey</name>
    <dbReference type="NCBI Taxonomy" id="9541"/>
    <lineage>
        <taxon>Eukaryota</taxon>
        <taxon>Metazoa</taxon>
        <taxon>Chordata</taxon>
        <taxon>Craniata</taxon>
        <taxon>Vertebrata</taxon>
        <taxon>Euteleostomi</taxon>
        <taxon>Mammalia</taxon>
        <taxon>Eutheria</taxon>
        <taxon>Euarchontoglires</taxon>
        <taxon>Primates</taxon>
        <taxon>Haplorrhini</taxon>
        <taxon>Catarrhini</taxon>
        <taxon>Cercopithecidae</taxon>
        <taxon>Cercopithecinae</taxon>
        <taxon>Macaca</taxon>
    </lineage>
</organism>
<name>IPYR_MACFA</name>
<keyword id="KW-0007">Acetylation</keyword>
<keyword id="KW-0963">Cytoplasm</keyword>
<keyword id="KW-0378">Hydrolase</keyword>
<keyword id="KW-0460">Magnesium</keyword>
<keyword id="KW-0479">Metal-binding</keyword>
<keyword id="KW-0597">Phosphoprotein</keyword>
<keyword id="KW-1185">Reference proteome</keyword>
<gene>
    <name type="primary">PPA1</name>
    <name type="synonym">PP</name>
    <name type="ORF">QccE-19734</name>
</gene>
<reference key="1">
    <citation type="submission" date="2005-06" db="EMBL/GenBank/DDBJ databases">
        <title>DNA sequences of macaque genes expressed in brain or testis and its evolutionary implications.</title>
        <authorList>
            <consortium name="International consortium for macaque cDNA sequencing and analysis"/>
        </authorList>
    </citation>
    <scope>NUCLEOTIDE SEQUENCE [LARGE SCALE MRNA]</scope>
    <source>
        <tissue>Brain cortex</tissue>
    </source>
</reference>